<reference key="1">
    <citation type="journal article" date="2012" name="Nature">
        <title>Mutations in DMRT3 affect locomotion in horses and spinal circuit function in mice.</title>
        <authorList>
            <person name="Andersson L.S."/>
            <person name="Larhammar M."/>
            <person name="Memic F."/>
            <person name="Wootz H."/>
            <person name="Schwochow D."/>
            <person name="Rubin C.-J."/>
            <person name="Patra K."/>
            <person name="Arnason T."/>
            <person name="Wellbring L."/>
            <person name="Hjalm G."/>
            <person name="Imsland F."/>
            <person name="Petersen J.L."/>
            <person name="McCue M.E."/>
            <person name="Mickelson J.R."/>
            <person name="Cothran G."/>
            <person name="Ahituv N."/>
            <person name="Roepstorff L."/>
            <person name="Mikko S."/>
            <person name="Vallstedt A."/>
            <person name="Lindgren G."/>
            <person name="Andersson L."/>
            <person name="Kullander K."/>
        </authorList>
    </citation>
    <scope>NUCLEOTIDE SEQUENCE [GENOMIC DNA / MRNA]</scope>
    <scope>FUNCTION</scope>
    <scope>TISSUE SPECIFICITY</scope>
    <scope>POLYMORPHISM</scope>
    <source>
        <strain>Icelandic</strain>
    </source>
</reference>
<keyword id="KW-0217">Developmental protein</keyword>
<keyword id="KW-0221">Differentiation</keyword>
<keyword id="KW-0238">DNA-binding</keyword>
<keyword id="KW-0479">Metal-binding</keyword>
<keyword id="KW-0539">Nucleus</keyword>
<keyword id="KW-0726">Sexual differentiation</keyword>
<keyword id="KW-0804">Transcription</keyword>
<keyword id="KW-0805">Transcription regulation</keyword>
<keyword id="KW-0862">Zinc</keyword>
<feature type="chain" id="PRO_0000422702" description="Doublesex and mab-3 related transcription factor 3, truncated">
    <location>
        <begin position="1"/>
        <end position="300"/>
    </location>
</feature>
<feature type="domain" description="DMA" evidence="2">
    <location>
        <begin position="251"/>
        <end position="286"/>
    </location>
</feature>
<feature type="DNA-binding region" description="DM" evidence="3">
    <location>
        <begin position="29"/>
        <end position="76"/>
    </location>
</feature>
<feature type="region of interest" description="Disordered" evidence="4">
    <location>
        <begin position="89"/>
        <end position="129"/>
    </location>
</feature>
<feature type="region of interest" description="Disordered" evidence="4">
    <location>
        <begin position="157"/>
        <end position="226"/>
    </location>
</feature>
<feature type="compositionally biased region" description="Pro residues" evidence="4">
    <location>
        <begin position="108"/>
        <end position="124"/>
    </location>
</feature>
<feature type="compositionally biased region" description="Basic and acidic residues" evidence="4">
    <location>
        <begin position="172"/>
        <end position="181"/>
    </location>
</feature>
<dbReference type="EMBL" id="JQ922366">
    <property type="protein sequence ID" value="AFK83803.1"/>
    <property type="molecule type" value="Genomic_DNA"/>
</dbReference>
<dbReference type="EMBL" id="JQ922370">
    <property type="protein sequence ID" value="AFK83805.1"/>
    <property type="molecule type" value="mRNA"/>
</dbReference>
<dbReference type="SMR" id="J7FCF0"/>
<dbReference type="GO" id="GO:0005634">
    <property type="term" value="C:nucleus"/>
    <property type="evidence" value="ECO:0000315"/>
    <property type="project" value="AgBase"/>
</dbReference>
<dbReference type="GO" id="GO:0003677">
    <property type="term" value="F:DNA binding"/>
    <property type="evidence" value="ECO:0000315"/>
    <property type="project" value="AgBase"/>
</dbReference>
<dbReference type="GO" id="GO:0046872">
    <property type="term" value="F:metal ion binding"/>
    <property type="evidence" value="ECO:0007669"/>
    <property type="project" value="UniProtKB-KW"/>
</dbReference>
<dbReference type="GO" id="GO:0043565">
    <property type="term" value="F:sequence-specific DNA binding"/>
    <property type="evidence" value="ECO:0007669"/>
    <property type="project" value="InterPro"/>
</dbReference>
<dbReference type="GO" id="GO:0008344">
    <property type="term" value="P:adult locomotory behavior"/>
    <property type="evidence" value="ECO:0000315"/>
    <property type="project" value="AgBase"/>
</dbReference>
<dbReference type="GO" id="GO:0006355">
    <property type="term" value="P:regulation of DNA-templated transcription"/>
    <property type="evidence" value="ECO:0007669"/>
    <property type="project" value="InterPro"/>
</dbReference>
<dbReference type="GO" id="GO:0007548">
    <property type="term" value="P:sex differentiation"/>
    <property type="evidence" value="ECO:0007669"/>
    <property type="project" value="UniProtKB-KW"/>
</dbReference>
<dbReference type="GO" id="GO:0019226">
    <property type="term" value="P:transmission of nerve impulse"/>
    <property type="evidence" value="ECO:0000250"/>
    <property type="project" value="AgBase"/>
</dbReference>
<dbReference type="GO" id="GO:0021521">
    <property type="term" value="P:ventral spinal cord interneuron specification"/>
    <property type="evidence" value="ECO:0000250"/>
    <property type="project" value="AgBase"/>
</dbReference>
<dbReference type="FunFam" id="4.10.1040.10:FF:000001">
    <property type="entry name" value="doublesex- and mab-3-related transcription factor 1"/>
    <property type="match status" value="1"/>
</dbReference>
<dbReference type="Gene3D" id="4.10.1040.10">
    <property type="entry name" value="DM DNA-binding domain"/>
    <property type="match status" value="1"/>
</dbReference>
<dbReference type="InterPro" id="IPR001275">
    <property type="entry name" value="DM_DNA-bd"/>
</dbReference>
<dbReference type="InterPro" id="IPR036407">
    <property type="entry name" value="DM_DNA-bd_sf"/>
</dbReference>
<dbReference type="InterPro" id="IPR005173">
    <property type="entry name" value="DMA"/>
</dbReference>
<dbReference type="InterPro" id="IPR026607">
    <property type="entry name" value="DMRT"/>
</dbReference>
<dbReference type="InterPro" id="IPR009060">
    <property type="entry name" value="UBA-like_sf"/>
</dbReference>
<dbReference type="PANTHER" id="PTHR12322">
    <property type="entry name" value="DOUBLESEX AND MAB-3 RELATED TRANSCRIPTION FACTOR DMRT"/>
    <property type="match status" value="1"/>
</dbReference>
<dbReference type="PANTHER" id="PTHR12322:SF120">
    <property type="entry name" value="DOUBLESEX- AND MAB-3-RELATED TRANSCRIPTION FACTOR 3"/>
    <property type="match status" value="1"/>
</dbReference>
<dbReference type="Pfam" id="PF00751">
    <property type="entry name" value="DM"/>
    <property type="match status" value="1"/>
</dbReference>
<dbReference type="Pfam" id="PF03474">
    <property type="entry name" value="DMA"/>
    <property type="match status" value="1"/>
</dbReference>
<dbReference type="SMART" id="SM00301">
    <property type="entry name" value="DM"/>
    <property type="match status" value="1"/>
</dbReference>
<dbReference type="SUPFAM" id="SSF82927">
    <property type="entry name" value="Cysteine-rich DNA binding domain, (DM domain)"/>
    <property type="match status" value="1"/>
</dbReference>
<dbReference type="SUPFAM" id="SSF46934">
    <property type="entry name" value="UBA-like"/>
    <property type="match status" value="1"/>
</dbReference>
<dbReference type="PROSITE" id="PS40000">
    <property type="entry name" value="DM_1"/>
    <property type="match status" value="1"/>
</dbReference>
<dbReference type="PROSITE" id="PS50809">
    <property type="entry name" value="DM_2"/>
    <property type="match status" value="1"/>
</dbReference>
<proteinExistence type="evidence at transcript level"/>
<comment type="function">
    <text evidence="5">Probable transcription factor that plays a role in configuring the spinal circuits controlling stride in vertebrates. Involved in neuronal specification within a specific subdivision of spinal cord neurons and in the development of a coordinated locomotor network controlling limb movements. May regulate transcription during sexual development.</text>
</comment>
<comment type="subcellular location">
    <subcellularLocation>
        <location evidence="3">Nucleus</location>
    </subcellularLocation>
</comment>
<comment type="tissue specificity">
    <text evidence="5">Expressed in the spinal cord, in a small population of neurons located in the ventral horn and around the central canal.</text>
</comment>
<comment type="domain">
    <text evidence="1">DMA domain interacts with ubiquitin.</text>
</comment>
<comment type="polymorphism">
    <text>This sequence corresponds to the allele A, which contains a premature stop at position 301, and is linked to the ability to perform alternate gaits, which can be either pace or four-beat ambling gaits (the wild-type protein sequence: AC F6W2R2). The allele A sequence has a favorable effect on harness racing performance and on the diversification of the domestic horse, as the altered gait characteristics of a number of breeds apparently require this mutation. Homozygosity for the mutation is required, but not sufficient for pacing, as many Standardbred trotters and some Icelandic horses that are homozygous for this mutation do not pace. Allele A has been shown to be present in the following horse populations: Icelandic horses four-gaited and five-gaited, Kentucky mountain saddle horse, Missouri fox trotter, Paso fino, Peruvian paso, Rocky mountain horse, Tennessee walking horse, Standardbred trotter (Sweden, USA), Standardbred pacer (USA), and French trotter (France).</text>
</comment>
<comment type="miscellaneous">
    <text>DMRT3 is a marker for a subset of spinal cord neurons (dI6).</text>
</comment>
<comment type="similarity">
    <text evidence="6">Belongs to the DMRT family.</text>
</comment>
<comment type="online information" name="Protein Spotlight">
    <link uri="https://www.proteinspotlight.org/back_issues/154/"/>
    <text>A gait on the wildside - Issue 154 of November 2013</text>
</comment>
<comment type="online information" name="Protein Spotlight">
    <link uri="https://www.proteinspotlight.org/back_issues/053/"/>
    <text>Bio-Art - Issue 53 of December 2004</text>
</comment>
<evidence type="ECO:0000250" key="1">
    <source>
        <dbReference type="UniProtKB" id="Q9NQL9"/>
    </source>
</evidence>
<evidence type="ECO:0000255" key="2"/>
<evidence type="ECO:0000255" key="3">
    <source>
        <dbReference type="PROSITE-ProRule" id="PRU00070"/>
    </source>
</evidence>
<evidence type="ECO:0000256" key="4">
    <source>
        <dbReference type="SAM" id="MobiDB-lite"/>
    </source>
</evidence>
<evidence type="ECO:0000269" key="5">
    <source>
    </source>
</evidence>
<evidence type="ECO:0000305" key="6"/>
<name>DMR3T_HORSE</name>
<protein>
    <recommendedName>
        <fullName>Doublesex and mab-3 related transcription factor 3, truncated</fullName>
    </recommendedName>
    <alternativeName>
        <fullName>Duplex and mab-3 related transcription factor 3 allele A</fullName>
    </alternativeName>
</protein>
<gene>
    <name type="primary">DMRT3</name>
</gene>
<sequence>MNGYGSPYLYMGGPVSQPPRAPLQRTPKCARCRNHGVLSWLKGHKRYCRFKDCTCEKCILIIERQRVMAAQVALRRQQANESLESLIPDSLRALPGPPPPGDAAAAAPQPPPTSQPSQPPPPQRPAAELAAAAALRWATEPQPGALQAQLAKPDLTEERLGDGSSADNTETFSDKDTDQRSSPDVVKSKGCFTPESPEVVSVDEGGYAVQKNGGTSESRPDSPKYHGEQNHLLIEGPSGTVSLPFSLKANRPPLEVLKKIFPNQKPTVLELILKGCGGDLVSAVEVLLSSRSSASAADRT</sequence>
<accession>J7FCF0</accession>
<organism>
    <name type="scientific">Equus caballus</name>
    <name type="common">Horse</name>
    <dbReference type="NCBI Taxonomy" id="9796"/>
    <lineage>
        <taxon>Eukaryota</taxon>
        <taxon>Metazoa</taxon>
        <taxon>Chordata</taxon>
        <taxon>Craniata</taxon>
        <taxon>Vertebrata</taxon>
        <taxon>Euteleostomi</taxon>
        <taxon>Mammalia</taxon>
        <taxon>Eutheria</taxon>
        <taxon>Laurasiatheria</taxon>
        <taxon>Perissodactyla</taxon>
        <taxon>Equidae</taxon>
        <taxon>Equus</taxon>
    </lineage>
</organism>